<proteinExistence type="inferred from homology"/>
<keyword id="KW-0963">Cytoplasm</keyword>
<keyword id="KW-0240">DNA-directed RNA polymerase</keyword>
<keyword id="KW-0548">Nucleotidyltransferase</keyword>
<keyword id="KW-0804">Transcription</keyword>
<keyword id="KW-0808">Transferase</keyword>
<feature type="chain" id="PRO_0000146108" description="DNA-directed RNA polymerase subunit Rpo5">
    <location>
        <begin position="1"/>
        <end position="87"/>
    </location>
</feature>
<sequence>MAKFNVLDHNLVPEHHIVSEEEEKTILKELGIEKEFLPRISPNDPVIKALEAIHGKIKDGTVIKIIRNSPTMGHSVYYRVVASEVFK</sequence>
<protein>
    <recommendedName>
        <fullName evidence="1">DNA-directed RNA polymerase subunit Rpo5</fullName>
        <ecNumber evidence="1">2.7.7.6</ecNumber>
    </recommendedName>
    <alternativeName>
        <fullName evidence="1">DNA-directed RNA polymerase subunit H</fullName>
    </alternativeName>
</protein>
<gene>
    <name evidence="1" type="primary">rpo5</name>
    <name evidence="1" type="synonym">rpoH</name>
    <name type="ordered locus">TV1209</name>
    <name type="ORF">TVG1241478</name>
</gene>
<accession>Q979F2</accession>
<comment type="function">
    <text evidence="1">DNA-dependent RNA polymerase (RNAP) catalyzes the transcription of DNA into RNA using the four ribonucleoside triphosphates as substrates.</text>
</comment>
<comment type="catalytic activity">
    <reaction evidence="1">
        <text>RNA(n) + a ribonucleoside 5'-triphosphate = RNA(n+1) + diphosphate</text>
        <dbReference type="Rhea" id="RHEA:21248"/>
        <dbReference type="Rhea" id="RHEA-COMP:14527"/>
        <dbReference type="Rhea" id="RHEA-COMP:17342"/>
        <dbReference type="ChEBI" id="CHEBI:33019"/>
        <dbReference type="ChEBI" id="CHEBI:61557"/>
        <dbReference type="ChEBI" id="CHEBI:140395"/>
        <dbReference type="EC" id="2.7.7.6"/>
    </reaction>
</comment>
<comment type="subunit">
    <text evidence="1">Part of the RNA polymerase complex.</text>
</comment>
<comment type="subcellular location">
    <subcellularLocation>
        <location evidence="1">Cytoplasm</location>
    </subcellularLocation>
</comment>
<comment type="similarity">
    <text evidence="1">Belongs to the archaeal Rpo5/eukaryotic RPB5 RNA polymerase subunit family.</text>
</comment>
<comment type="sequence caution" evidence="2">
    <conflict type="erroneous initiation">
        <sequence resource="EMBL-CDS" id="BAB60351"/>
    </conflict>
    <text>Extended N-terminus.</text>
</comment>
<evidence type="ECO:0000255" key="1">
    <source>
        <dbReference type="HAMAP-Rule" id="MF_00025"/>
    </source>
</evidence>
<evidence type="ECO:0000305" key="2"/>
<organism>
    <name type="scientific">Thermoplasma volcanium (strain ATCC 51530 / DSM 4299 / JCM 9571 / NBRC 15438 / GSS1)</name>
    <dbReference type="NCBI Taxonomy" id="273116"/>
    <lineage>
        <taxon>Archaea</taxon>
        <taxon>Methanobacteriati</taxon>
        <taxon>Thermoplasmatota</taxon>
        <taxon>Thermoplasmata</taxon>
        <taxon>Thermoplasmatales</taxon>
        <taxon>Thermoplasmataceae</taxon>
        <taxon>Thermoplasma</taxon>
    </lineage>
</organism>
<dbReference type="EC" id="2.7.7.6" evidence="1"/>
<dbReference type="EMBL" id="BA000011">
    <property type="protein sequence ID" value="BAB60351.1"/>
    <property type="status" value="ALT_INIT"/>
    <property type="molecule type" value="Genomic_DNA"/>
</dbReference>
<dbReference type="RefSeq" id="WP_010917441.1">
    <property type="nucleotide sequence ID" value="NC_002689.2"/>
</dbReference>
<dbReference type="SMR" id="Q979F2"/>
<dbReference type="STRING" id="273116.gene:9382011"/>
<dbReference type="PaxDb" id="273116-14325447"/>
<dbReference type="GeneID" id="1441323"/>
<dbReference type="KEGG" id="tvo:TVG1241478"/>
<dbReference type="eggNOG" id="arCOG04258">
    <property type="taxonomic scope" value="Archaea"/>
</dbReference>
<dbReference type="HOGENOM" id="CLU_058320_4_0_2"/>
<dbReference type="OrthoDB" id="30537at2157"/>
<dbReference type="PhylomeDB" id="Q979F2"/>
<dbReference type="Proteomes" id="UP000001017">
    <property type="component" value="Chromosome"/>
</dbReference>
<dbReference type="GO" id="GO:0005737">
    <property type="term" value="C:cytoplasm"/>
    <property type="evidence" value="ECO:0007669"/>
    <property type="project" value="UniProtKB-SubCell"/>
</dbReference>
<dbReference type="GO" id="GO:0000428">
    <property type="term" value="C:DNA-directed RNA polymerase complex"/>
    <property type="evidence" value="ECO:0007669"/>
    <property type="project" value="UniProtKB-KW"/>
</dbReference>
<dbReference type="GO" id="GO:0003677">
    <property type="term" value="F:DNA binding"/>
    <property type="evidence" value="ECO:0007669"/>
    <property type="project" value="InterPro"/>
</dbReference>
<dbReference type="GO" id="GO:0003899">
    <property type="term" value="F:DNA-directed RNA polymerase activity"/>
    <property type="evidence" value="ECO:0007669"/>
    <property type="project" value="UniProtKB-UniRule"/>
</dbReference>
<dbReference type="GO" id="GO:0006366">
    <property type="term" value="P:transcription by RNA polymerase II"/>
    <property type="evidence" value="ECO:0007669"/>
    <property type="project" value="TreeGrafter"/>
</dbReference>
<dbReference type="GO" id="GO:0006362">
    <property type="term" value="P:transcription elongation by RNA polymerase I"/>
    <property type="evidence" value="ECO:0007669"/>
    <property type="project" value="TreeGrafter"/>
</dbReference>
<dbReference type="GO" id="GO:0042797">
    <property type="term" value="P:tRNA transcription by RNA polymerase III"/>
    <property type="evidence" value="ECO:0007669"/>
    <property type="project" value="TreeGrafter"/>
</dbReference>
<dbReference type="Gene3D" id="3.90.940.20">
    <property type="entry name" value="RPB5-like RNA polymerase subunit"/>
    <property type="match status" value="1"/>
</dbReference>
<dbReference type="HAMAP" id="MF_00025">
    <property type="entry name" value="RNApol_Rpo5_RPB5"/>
    <property type="match status" value="1"/>
</dbReference>
<dbReference type="InterPro" id="IPR014381">
    <property type="entry name" value="Arch_Rpo5/euc_Rpb5"/>
</dbReference>
<dbReference type="InterPro" id="IPR000783">
    <property type="entry name" value="RNA_pol_subH/Rpb5_C"/>
</dbReference>
<dbReference type="InterPro" id="IPR020608">
    <property type="entry name" value="RNA_pol_subH/Rpb5_CS"/>
</dbReference>
<dbReference type="InterPro" id="IPR035913">
    <property type="entry name" value="RPB5-like_sf"/>
</dbReference>
<dbReference type="NCBIfam" id="NF007129">
    <property type="entry name" value="PRK09570.1"/>
    <property type="match status" value="1"/>
</dbReference>
<dbReference type="PANTHER" id="PTHR10535">
    <property type="entry name" value="DNA-DIRECTED RNA POLYMERASES I, II, AND III SUBUNIT RPABC1"/>
    <property type="match status" value="1"/>
</dbReference>
<dbReference type="PANTHER" id="PTHR10535:SF0">
    <property type="entry name" value="DNA-DIRECTED RNA POLYMERASES I, II, AND III SUBUNIT RPABC1"/>
    <property type="match status" value="1"/>
</dbReference>
<dbReference type="Pfam" id="PF01191">
    <property type="entry name" value="RNA_pol_Rpb5_C"/>
    <property type="match status" value="1"/>
</dbReference>
<dbReference type="SUPFAM" id="SSF55287">
    <property type="entry name" value="RPB5-like RNA polymerase subunit"/>
    <property type="match status" value="1"/>
</dbReference>
<dbReference type="PROSITE" id="PS01110">
    <property type="entry name" value="RNA_POL_H_23KD"/>
    <property type="match status" value="1"/>
</dbReference>
<name>RPO5_THEVO</name>
<reference key="1">
    <citation type="journal article" date="2000" name="Proc. Natl. Acad. Sci. U.S.A.">
        <title>Archaeal adaptation to higher temperatures revealed by genomic sequence of Thermoplasma volcanium.</title>
        <authorList>
            <person name="Kawashima T."/>
            <person name="Amano N."/>
            <person name="Koike H."/>
            <person name="Makino S."/>
            <person name="Higuchi S."/>
            <person name="Kawashima-Ohya Y."/>
            <person name="Watanabe K."/>
            <person name="Yamazaki M."/>
            <person name="Kanehori K."/>
            <person name="Kawamoto T."/>
            <person name="Nunoshiba T."/>
            <person name="Yamamoto Y."/>
            <person name="Aramaki H."/>
            <person name="Makino K."/>
            <person name="Suzuki M."/>
        </authorList>
    </citation>
    <scope>NUCLEOTIDE SEQUENCE [LARGE SCALE GENOMIC DNA]</scope>
    <source>
        <strain>ATCC 51530 / DSM 4299 / JCM 9571 / NBRC 15438 / GSS1</strain>
    </source>
</reference>